<proteinExistence type="inferred from homology"/>
<feature type="chain" id="PRO_0000111244" description="Small ribosomal subunit protein bS18">
    <location>
        <begin position="1"/>
        <end position="79"/>
    </location>
</feature>
<gene>
    <name evidence="1" type="primary">rpsR</name>
    <name type="ordered locus">spyM18_1895</name>
</gene>
<reference key="1">
    <citation type="journal article" date="2002" name="Proc. Natl. Acad. Sci. U.S.A.">
        <title>Genome sequence and comparative microarray analysis of serotype M18 group A Streptococcus strains associated with acute rheumatic fever outbreaks.</title>
        <authorList>
            <person name="Smoot J.C."/>
            <person name="Barbian K.D."/>
            <person name="Van Gompel J.J."/>
            <person name="Smoot L.M."/>
            <person name="Chaussee M.S."/>
            <person name="Sylva G.L."/>
            <person name="Sturdevant D.E."/>
            <person name="Ricklefs S.M."/>
            <person name="Porcella S.F."/>
            <person name="Parkins L.D."/>
            <person name="Beres S.B."/>
            <person name="Campbell D.S."/>
            <person name="Smith T.M."/>
            <person name="Zhang Q."/>
            <person name="Kapur V."/>
            <person name="Daly J.A."/>
            <person name="Veasy L.G."/>
            <person name="Musser J.M."/>
        </authorList>
    </citation>
    <scope>NUCLEOTIDE SEQUENCE [LARGE SCALE GENOMIC DNA]</scope>
    <source>
        <strain>MGAS8232</strain>
    </source>
</reference>
<evidence type="ECO:0000255" key="1">
    <source>
        <dbReference type="HAMAP-Rule" id="MF_00270"/>
    </source>
</evidence>
<evidence type="ECO:0000305" key="2"/>
<protein>
    <recommendedName>
        <fullName evidence="1">Small ribosomal subunit protein bS18</fullName>
    </recommendedName>
    <alternativeName>
        <fullName evidence="2">30S ribosomal protein S18</fullName>
    </alternativeName>
</protein>
<dbReference type="EMBL" id="AE009949">
    <property type="protein sequence ID" value="AAL98397.1"/>
    <property type="molecule type" value="Genomic_DNA"/>
</dbReference>
<dbReference type="RefSeq" id="WP_002983142.1">
    <property type="nucleotide sequence ID" value="NC_003485.1"/>
</dbReference>
<dbReference type="SMR" id="P66477"/>
<dbReference type="GeneID" id="93826879"/>
<dbReference type="KEGG" id="spm:spyM18_1895"/>
<dbReference type="HOGENOM" id="CLU_148710_2_2_9"/>
<dbReference type="GO" id="GO:0022627">
    <property type="term" value="C:cytosolic small ribosomal subunit"/>
    <property type="evidence" value="ECO:0007669"/>
    <property type="project" value="TreeGrafter"/>
</dbReference>
<dbReference type="GO" id="GO:0070181">
    <property type="term" value="F:small ribosomal subunit rRNA binding"/>
    <property type="evidence" value="ECO:0007669"/>
    <property type="project" value="TreeGrafter"/>
</dbReference>
<dbReference type="GO" id="GO:0003735">
    <property type="term" value="F:structural constituent of ribosome"/>
    <property type="evidence" value="ECO:0007669"/>
    <property type="project" value="InterPro"/>
</dbReference>
<dbReference type="GO" id="GO:0006412">
    <property type="term" value="P:translation"/>
    <property type="evidence" value="ECO:0007669"/>
    <property type="project" value="UniProtKB-UniRule"/>
</dbReference>
<dbReference type="FunFam" id="4.10.640.10:FF:000003">
    <property type="entry name" value="30S ribosomal protein S18"/>
    <property type="match status" value="1"/>
</dbReference>
<dbReference type="Gene3D" id="4.10.640.10">
    <property type="entry name" value="Ribosomal protein S18"/>
    <property type="match status" value="1"/>
</dbReference>
<dbReference type="HAMAP" id="MF_00270">
    <property type="entry name" value="Ribosomal_bS18"/>
    <property type="match status" value="1"/>
</dbReference>
<dbReference type="InterPro" id="IPR001648">
    <property type="entry name" value="Ribosomal_bS18"/>
</dbReference>
<dbReference type="InterPro" id="IPR018275">
    <property type="entry name" value="Ribosomal_bS18_CS"/>
</dbReference>
<dbReference type="InterPro" id="IPR036870">
    <property type="entry name" value="Ribosomal_bS18_sf"/>
</dbReference>
<dbReference type="NCBIfam" id="TIGR00165">
    <property type="entry name" value="S18"/>
    <property type="match status" value="1"/>
</dbReference>
<dbReference type="PANTHER" id="PTHR13479">
    <property type="entry name" value="30S RIBOSOMAL PROTEIN S18"/>
    <property type="match status" value="1"/>
</dbReference>
<dbReference type="PANTHER" id="PTHR13479:SF40">
    <property type="entry name" value="SMALL RIBOSOMAL SUBUNIT PROTEIN BS18M"/>
    <property type="match status" value="1"/>
</dbReference>
<dbReference type="Pfam" id="PF01084">
    <property type="entry name" value="Ribosomal_S18"/>
    <property type="match status" value="1"/>
</dbReference>
<dbReference type="PRINTS" id="PR00974">
    <property type="entry name" value="RIBOSOMALS18"/>
</dbReference>
<dbReference type="SUPFAM" id="SSF46911">
    <property type="entry name" value="Ribosomal protein S18"/>
    <property type="match status" value="1"/>
</dbReference>
<dbReference type="PROSITE" id="PS00057">
    <property type="entry name" value="RIBOSOMAL_S18"/>
    <property type="match status" value="1"/>
</dbReference>
<organism>
    <name type="scientific">Streptococcus pyogenes serotype M18 (strain MGAS8232)</name>
    <dbReference type="NCBI Taxonomy" id="186103"/>
    <lineage>
        <taxon>Bacteria</taxon>
        <taxon>Bacillati</taxon>
        <taxon>Bacillota</taxon>
        <taxon>Bacilli</taxon>
        <taxon>Lactobacillales</taxon>
        <taxon>Streptococcaceae</taxon>
        <taxon>Streptococcus</taxon>
    </lineage>
</organism>
<keyword id="KW-0687">Ribonucleoprotein</keyword>
<keyword id="KW-0689">Ribosomal protein</keyword>
<keyword id="KW-0694">RNA-binding</keyword>
<keyword id="KW-0699">rRNA-binding</keyword>
<sequence>MAQQRRGGFKRRKKVDFIAANKIEYVDYKDTELLSRFVSERGKILPRRVTGTSAKNQRKVTTAIKRARVMALMPYVNED</sequence>
<name>RS18_STRP8</name>
<accession>P66477</accession>
<accession>Q99Y81</accession>
<comment type="function">
    <text evidence="1">Binds as a heterodimer with protein bS6 to the central domain of the 16S rRNA, where it helps stabilize the platform of the 30S subunit.</text>
</comment>
<comment type="subunit">
    <text evidence="1">Part of the 30S ribosomal subunit. Forms a tight heterodimer with protein bS6.</text>
</comment>
<comment type="similarity">
    <text evidence="1">Belongs to the bacterial ribosomal protein bS18 family.</text>
</comment>